<accession>Q5FM81</accession>
<comment type="function">
    <text evidence="1">One of the primary rRNA binding proteins, it binds specifically to the 5'-end of 16S ribosomal RNA.</text>
</comment>
<comment type="subunit">
    <text evidence="1">Part of the 30S ribosomal subunit.</text>
</comment>
<comment type="similarity">
    <text evidence="1">Belongs to the universal ribosomal protein uS17 family.</text>
</comment>
<proteinExistence type="inferred from homology"/>
<evidence type="ECO:0000255" key="1">
    <source>
        <dbReference type="HAMAP-Rule" id="MF_01345"/>
    </source>
</evidence>
<evidence type="ECO:0000305" key="2"/>
<protein>
    <recommendedName>
        <fullName evidence="1">Small ribosomal subunit protein uS17</fullName>
    </recommendedName>
    <alternativeName>
        <fullName evidence="2">30S ribosomal protein S17</fullName>
    </alternativeName>
</protein>
<reference key="1">
    <citation type="journal article" date="2005" name="Proc. Natl. Acad. Sci. U.S.A.">
        <title>Complete genome sequence of the probiotic lactic acid bacterium Lactobacillus acidophilus NCFM.</title>
        <authorList>
            <person name="Altermann E."/>
            <person name="Russell W.M."/>
            <person name="Azcarate-Peril M.A."/>
            <person name="Barrangou R."/>
            <person name="Buck B.L."/>
            <person name="McAuliffe O."/>
            <person name="Souther N."/>
            <person name="Dobson A."/>
            <person name="Duong T."/>
            <person name="Callanan M."/>
            <person name="Lick S."/>
            <person name="Hamrick A."/>
            <person name="Cano R."/>
            <person name="Klaenhammer T.R."/>
        </authorList>
    </citation>
    <scope>NUCLEOTIDE SEQUENCE [LARGE SCALE GENOMIC DNA]</scope>
    <source>
        <strain>ATCC 700396 / NCK56 / N2 / NCFM</strain>
    </source>
</reference>
<keyword id="KW-1185">Reference proteome</keyword>
<keyword id="KW-0687">Ribonucleoprotein</keyword>
<keyword id="KW-0689">Ribosomal protein</keyword>
<keyword id="KW-0694">RNA-binding</keyword>
<keyword id="KW-0699">rRNA-binding</keyword>
<organism>
    <name type="scientific">Lactobacillus acidophilus (strain ATCC 700396 / NCK56 / N2 / NCFM)</name>
    <dbReference type="NCBI Taxonomy" id="272621"/>
    <lineage>
        <taxon>Bacteria</taxon>
        <taxon>Bacillati</taxon>
        <taxon>Bacillota</taxon>
        <taxon>Bacilli</taxon>
        <taxon>Lactobacillales</taxon>
        <taxon>Lactobacillaceae</taxon>
        <taxon>Lactobacillus</taxon>
    </lineage>
</organism>
<sequence>MSETNERNRRHVYQGRVVSDKMDKTITVVVDTYKNHPVYNKRFRYSKKYYAQDENNEAKVGDTVRIMETRPLSRKKRFRLVKIVKKSV</sequence>
<feature type="chain" id="PRO_0000233490" description="Small ribosomal subunit protein uS17">
    <location>
        <begin position="1"/>
        <end position="88"/>
    </location>
</feature>
<dbReference type="EMBL" id="CP000033">
    <property type="protein sequence ID" value="AAV42193.1"/>
    <property type="molecule type" value="Genomic_DNA"/>
</dbReference>
<dbReference type="RefSeq" id="WP_011254114.1">
    <property type="nucleotide sequence ID" value="NC_006814.3"/>
</dbReference>
<dbReference type="RefSeq" id="YP_193224.1">
    <property type="nucleotide sequence ID" value="NC_006814.3"/>
</dbReference>
<dbReference type="SMR" id="Q5FM81"/>
<dbReference type="STRING" id="272621.LBA0300"/>
<dbReference type="GeneID" id="93290592"/>
<dbReference type="KEGG" id="lac:LBA0300"/>
<dbReference type="PATRIC" id="fig|272621.13.peg.286"/>
<dbReference type="eggNOG" id="COG0186">
    <property type="taxonomic scope" value="Bacteria"/>
</dbReference>
<dbReference type="HOGENOM" id="CLU_073626_1_0_9"/>
<dbReference type="OrthoDB" id="9811714at2"/>
<dbReference type="BioCyc" id="LACI272621:G1G49-294-MONOMER"/>
<dbReference type="Proteomes" id="UP000006381">
    <property type="component" value="Chromosome"/>
</dbReference>
<dbReference type="GO" id="GO:0022627">
    <property type="term" value="C:cytosolic small ribosomal subunit"/>
    <property type="evidence" value="ECO:0007669"/>
    <property type="project" value="TreeGrafter"/>
</dbReference>
<dbReference type="GO" id="GO:0019843">
    <property type="term" value="F:rRNA binding"/>
    <property type="evidence" value="ECO:0007669"/>
    <property type="project" value="UniProtKB-UniRule"/>
</dbReference>
<dbReference type="GO" id="GO:0003735">
    <property type="term" value="F:structural constituent of ribosome"/>
    <property type="evidence" value="ECO:0007669"/>
    <property type="project" value="InterPro"/>
</dbReference>
<dbReference type="GO" id="GO:0006412">
    <property type="term" value="P:translation"/>
    <property type="evidence" value="ECO:0007669"/>
    <property type="project" value="UniProtKB-UniRule"/>
</dbReference>
<dbReference type="CDD" id="cd00364">
    <property type="entry name" value="Ribosomal_uS17"/>
    <property type="match status" value="1"/>
</dbReference>
<dbReference type="Gene3D" id="2.40.50.140">
    <property type="entry name" value="Nucleic acid-binding proteins"/>
    <property type="match status" value="1"/>
</dbReference>
<dbReference type="HAMAP" id="MF_01345_B">
    <property type="entry name" value="Ribosomal_uS17_B"/>
    <property type="match status" value="1"/>
</dbReference>
<dbReference type="InterPro" id="IPR012340">
    <property type="entry name" value="NA-bd_OB-fold"/>
</dbReference>
<dbReference type="InterPro" id="IPR000266">
    <property type="entry name" value="Ribosomal_uS17"/>
</dbReference>
<dbReference type="InterPro" id="IPR019984">
    <property type="entry name" value="Ribosomal_uS17_bact/chlr"/>
</dbReference>
<dbReference type="InterPro" id="IPR019979">
    <property type="entry name" value="Ribosomal_uS17_CS"/>
</dbReference>
<dbReference type="NCBIfam" id="NF004123">
    <property type="entry name" value="PRK05610.1"/>
    <property type="match status" value="1"/>
</dbReference>
<dbReference type="NCBIfam" id="TIGR03635">
    <property type="entry name" value="uS17_bact"/>
    <property type="match status" value="1"/>
</dbReference>
<dbReference type="PANTHER" id="PTHR10744">
    <property type="entry name" value="40S RIBOSOMAL PROTEIN S11 FAMILY MEMBER"/>
    <property type="match status" value="1"/>
</dbReference>
<dbReference type="PANTHER" id="PTHR10744:SF1">
    <property type="entry name" value="SMALL RIBOSOMAL SUBUNIT PROTEIN US17M"/>
    <property type="match status" value="1"/>
</dbReference>
<dbReference type="Pfam" id="PF00366">
    <property type="entry name" value="Ribosomal_S17"/>
    <property type="match status" value="1"/>
</dbReference>
<dbReference type="PRINTS" id="PR00973">
    <property type="entry name" value="RIBOSOMALS17"/>
</dbReference>
<dbReference type="SUPFAM" id="SSF50249">
    <property type="entry name" value="Nucleic acid-binding proteins"/>
    <property type="match status" value="1"/>
</dbReference>
<dbReference type="PROSITE" id="PS00056">
    <property type="entry name" value="RIBOSOMAL_S17"/>
    <property type="match status" value="1"/>
</dbReference>
<gene>
    <name evidence="1" type="primary">rpsQ</name>
    <name type="ordered locus">LBA0300</name>
</gene>
<name>RS17_LACAC</name>